<keyword id="KW-0056">Arginine metabolism</keyword>
<keyword id="KW-0067">ATP-binding</keyword>
<keyword id="KW-0963">Cytoplasm</keyword>
<keyword id="KW-0418">Kinase</keyword>
<keyword id="KW-0547">Nucleotide-binding</keyword>
<keyword id="KW-0808">Transferase</keyword>
<accession>Q6GA44</accession>
<name>ARCC1_STAAS</name>
<protein>
    <recommendedName>
        <fullName>Carbamate kinase 1</fullName>
        <ecNumber>2.7.2.2</ecNumber>
    </recommendedName>
</protein>
<evidence type="ECO:0000305" key="1"/>
<dbReference type="EC" id="2.7.2.2"/>
<dbReference type="EMBL" id="BX571857">
    <property type="protein sequence ID" value="CAG42879.1"/>
    <property type="molecule type" value="Genomic_DNA"/>
</dbReference>
<dbReference type="SMR" id="Q6GA44"/>
<dbReference type="KEGG" id="sas:SAS1103"/>
<dbReference type="HOGENOM" id="CLU_076278_0_0_9"/>
<dbReference type="UniPathway" id="UPA00996">
    <property type="reaction ID" value="UER00366"/>
</dbReference>
<dbReference type="GO" id="GO:0005829">
    <property type="term" value="C:cytosol"/>
    <property type="evidence" value="ECO:0007669"/>
    <property type="project" value="TreeGrafter"/>
</dbReference>
<dbReference type="GO" id="GO:0005524">
    <property type="term" value="F:ATP binding"/>
    <property type="evidence" value="ECO:0007669"/>
    <property type="project" value="UniProtKB-KW"/>
</dbReference>
<dbReference type="GO" id="GO:0008804">
    <property type="term" value="F:carbamate kinase activity"/>
    <property type="evidence" value="ECO:0007669"/>
    <property type="project" value="UniProtKB-EC"/>
</dbReference>
<dbReference type="GO" id="GO:0019546">
    <property type="term" value="P:arginine deiminase pathway"/>
    <property type="evidence" value="ECO:0007669"/>
    <property type="project" value="TreeGrafter"/>
</dbReference>
<dbReference type="CDD" id="cd04235">
    <property type="entry name" value="AAK_CK"/>
    <property type="match status" value="1"/>
</dbReference>
<dbReference type="FunFam" id="3.40.1160.10:FF:000007">
    <property type="entry name" value="Carbamate kinase"/>
    <property type="match status" value="1"/>
</dbReference>
<dbReference type="Gene3D" id="3.40.1160.10">
    <property type="entry name" value="Acetylglutamate kinase-like"/>
    <property type="match status" value="1"/>
</dbReference>
<dbReference type="InterPro" id="IPR036393">
    <property type="entry name" value="AceGlu_kinase-like_sf"/>
</dbReference>
<dbReference type="InterPro" id="IPR001048">
    <property type="entry name" value="Asp/Glu/Uridylate_kinase"/>
</dbReference>
<dbReference type="InterPro" id="IPR003964">
    <property type="entry name" value="Carb_kinase"/>
</dbReference>
<dbReference type="NCBIfam" id="TIGR00746">
    <property type="entry name" value="arcC"/>
    <property type="match status" value="1"/>
</dbReference>
<dbReference type="NCBIfam" id="NF009007">
    <property type="entry name" value="PRK12352.1"/>
    <property type="match status" value="1"/>
</dbReference>
<dbReference type="PANTHER" id="PTHR30409">
    <property type="entry name" value="CARBAMATE KINASE"/>
    <property type="match status" value="1"/>
</dbReference>
<dbReference type="PANTHER" id="PTHR30409:SF1">
    <property type="entry name" value="CARBAMATE KINASE-RELATED"/>
    <property type="match status" value="1"/>
</dbReference>
<dbReference type="Pfam" id="PF00696">
    <property type="entry name" value="AA_kinase"/>
    <property type="match status" value="1"/>
</dbReference>
<dbReference type="PIRSF" id="PIRSF000723">
    <property type="entry name" value="Carbamate_kin"/>
    <property type="match status" value="1"/>
</dbReference>
<dbReference type="PRINTS" id="PR01469">
    <property type="entry name" value="CARBMTKINASE"/>
</dbReference>
<dbReference type="SUPFAM" id="SSF53633">
    <property type="entry name" value="Carbamate kinase-like"/>
    <property type="match status" value="1"/>
</dbReference>
<comment type="catalytic activity">
    <reaction>
        <text>hydrogencarbonate + NH4(+) + ATP = carbamoyl phosphate + ADP + H2O + H(+)</text>
        <dbReference type="Rhea" id="RHEA:10152"/>
        <dbReference type="ChEBI" id="CHEBI:15377"/>
        <dbReference type="ChEBI" id="CHEBI:15378"/>
        <dbReference type="ChEBI" id="CHEBI:17544"/>
        <dbReference type="ChEBI" id="CHEBI:28938"/>
        <dbReference type="ChEBI" id="CHEBI:30616"/>
        <dbReference type="ChEBI" id="CHEBI:58228"/>
        <dbReference type="ChEBI" id="CHEBI:456216"/>
        <dbReference type="EC" id="2.7.2.2"/>
    </reaction>
</comment>
<comment type="pathway">
    <text>Metabolic intermediate metabolism; carbamoyl phosphate degradation; CO(2) and NH(3) from carbamoyl phosphate: step 1/1.</text>
</comment>
<comment type="subcellular location">
    <subcellularLocation>
        <location evidence="1">Cytoplasm</location>
    </subcellularLocation>
</comment>
<comment type="similarity">
    <text evidence="1">Belongs to the carbamate kinase family.</text>
</comment>
<sequence>MAKIVVALGGNALGKSPQEQLELVKNTAKSLVGLITKGHEIVISHGNGPQVGSINLGLNYAAEHNQGPAFPFAECGAMSQAYIGYQLQESLQNELHSIGMDKQVVTLVTQVEVDENDPAFNNPSKPIGLFYNKEEAEQIQKEKGFIFVEDAGRGYRRVVPSPQPISIIELESIKTLIKNDTLVIAAGGGGIPVIREQHDGFKGIDAVIDKDKTSALLGANIQCDQLIILTAIDYVYINFNTENQQPLKTTNVDELKRYIDENQFAKGSMLPKIEAAISFIENNPKGSVLITSLNELDAALEGKVGTVIKK</sequence>
<proteinExistence type="inferred from homology"/>
<feature type="chain" id="PRO_0000269236" description="Carbamate kinase 1">
    <location>
        <begin position="1"/>
        <end position="310"/>
    </location>
</feature>
<gene>
    <name type="primary">arcC1</name>
    <name type="ordered locus">SAS1103</name>
</gene>
<reference key="1">
    <citation type="journal article" date="2004" name="Proc. Natl. Acad. Sci. U.S.A.">
        <title>Complete genomes of two clinical Staphylococcus aureus strains: evidence for the rapid evolution of virulence and drug resistance.</title>
        <authorList>
            <person name="Holden M.T.G."/>
            <person name="Feil E.J."/>
            <person name="Lindsay J.A."/>
            <person name="Peacock S.J."/>
            <person name="Day N.P.J."/>
            <person name="Enright M.C."/>
            <person name="Foster T.J."/>
            <person name="Moore C.E."/>
            <person name="Hurst L."/>
            <person name="Atkin R."/>
            <person name="Barron A."/>
            <person name="Bason N."/>
            <person name="Bentley S.D."/>
            <person name="Chillingworth C."/>
            <person name="Chillingworth T."/>
            <person name="Churcher C."/>
            <person name="Clark L."/>
            <person name="Corton C."/>
            <person name="Cronin A."/>
            <person name="Doggett J."/>
            <person name="Dowd L."/>
            <person name="Feltwell T."/>
            <person name="Hance Z."/>
            <person name="Harris B."/>
            <person name="Hauser H."/>
            <person name="Holroyd S."/>
            <person name="Jagels K."/>
            <person name="James K.D."/>
            <person name="Lennard N."/>
            <person name="Line A."/>
            <person name="Mayes R."/>
            <person name="Moule S."/>
            <person name="Mungall K."/>
            <person name="Ormond D."/>
            <person name="Quail M.A."/>
            <person name="Rabbinowitsch E."/>
            <person name="Rutherford K.M."/>
            <person name="Sanders M."/>
            <person name="Sharp S."/>
            <person name="Simmonds M."/>
            <person name="Stevens K."/>
            <person name="Whitehead S."/>
            <person name="Barrell B.G."/>
            <person name="Spratt B.G."/>
            <person name="Parkhill J."/>
        </authorList>
    </citation>
    <scope>NUCLEOTIDE SEQUENCE [LARGE SCALE GENOMIC DNA]</scope>
    <source>
        <strain>MSSA476</strain>
    </source>
</reference>
<organism>
    <name type="scientific">Staphylococcus aureus (strain MSSA476)</name>
    <dbReference type="NCBI Taxonomy" id="282459"/>
    <lineage>
        <taxon>Bacteria</taxon>
        <taxon>Bacillati</taxon>
        <taxon>Bacillota</taxon>
        <taxon>Bacilli</taxon>
        <taxon>Bacillales</taxon>
        <taxon>Staphylococcaceae</taxon>
        <taxon>Staphylococcus</taxon>
    </lineage>
</organism>